<comment type="subunit">
    <text evidence="1">Part of the 50S ribosomal subunit.</text>
</comment>
<comment type="similarity">
    <text evidence="1">Belongs to the universal ribosomal protein uL30 family.</text>
</comment>
<sequence>MFESTRKNIQPSDATLVITQTRGVTGSKQNHRDTLRSLGLKRIGHQVTRKADAVTVGMVNTVPHLVSVEEVNNG</sequence>
<protein>
    <recommendedName>
        <fullName evidence="1">Large ribosomal subunit protein uL30</fullName>
    </recommendedName>
    <alternativeName>
        <fullName evidence="2">50S ribosomal protein L30</fullName>
    </alternativeName>
</protein>
<proteinExistence type="inferred from homology"/>
<gene>
    <name evidence="1" type="primary">rpmD</name>
    <name type="ordered locus">Mlut_16990</name>
</gene>
<evidence type="ECO:0000255" key="1">
    <source>
        <dbReference type="HAMAP-Rule" id="MF_01371"/>
    </source>
</evidence>
<evidence type="ECO:0000305" key="2"/>
<dbReference type="EMBL" id="CP001628">
    <property type="protein sequence ID" value="ACS31186.1"/>
    <property type="molecule type" value="Genomic_DNA"/>
</dbReference>
<dbReference type="RefSeq" id="WP_010080391.1">
    <property type="nucleotide sequence ID" value="NC_012803.1"/>
</dbReference>
<dbReference type="SMR" id="C5CC45"/>
<dbReference type="STRING" id="465515.Mlut_16990"/>
<dbReference type="EnsemblBacteria" id="ACS31186">
    <property type="protein sequence ID" value="ACS31186"/>
    <property type="gene ID" value="Mlut_16990"/>
</dbReference>
<dbReference type="GeneID" id="93343566"/>
<dbReference type="KEGG" id="mlu:Mlut_16990"/>
<dbReference type="eggNOG" id="COG1841">
    <property type="taxonomic scope" value="Bacteria"/>
</dbReference>
<dbReference type="HOGENOM" id="CLU_131047_2_0_11"/>
<dbReference type="Proteomes" id="UP000000738">
    <property type="component" value="Chromosome"/>
</dbReference>
<dbReference type="GO" id="GO:0022625">
    <property type="term" value="C:cytosolic large ribosomal subunit"/>
    <property type="evidence" value="ECO:0007669"/>
    <property type="project" value="TreeGrafter"/>
</dbReference>
<dbReference type="GO" id="GO:0003735">
    <property type="term" value="F:structural constituent of ribosome"/>
    <property type="evidence" value="ECO:0007669"/>
    <property type="project" value="InterPro"/>
</dbReference>
<dbReference type="GO" id="GO:0006412">
    <property type="term" value="P:translation"/>
    <property type="evidence" value="ECO:0007669"/>
    <property type="project" value="UniProtKB-UniRule"/>
</dbReference>
<dbReference type="CDD" id="cd01658">
    <property type="entry name" value="Ribosomal_L30"/>
    <property type="match status" value="1"/>
</dbReference>
<dbReference type="Gene3D" id="3.30.1390.20">
    <property type="entry name" value="Ribosomal protein L30, ferredoxin-like fold domain"/>
    <property type="match status" value="1"/>
</dbReference>
<dbReference type="HAMAP" id="MF_01371_B">
    <property type="entry name" value="Ribosomal_uL30_B"/>
    <property type="match status" value="1"/>
</dbReference>
<dbReference type="InterPro" id="IPR036919">
    <property type="entry name" value="Ribo_uL30_ferredoxin-like_sf"/>
</dbReference>
<dbReference type="InterPro" id="IPR005996">
    <property type="entry name" value="Ribosomal_uL30_bac-type"/>
</dbReference>
<dbReference type="InterPro" id="IPR018038">
    <property type="entry name" value="Ribosomal_uL30_CS"/>
</dbReference>
<dbReference type="InterPro" id="IPR016082">
    <property type="entry name" value="Ribosomal_uL30_ferredoxin-like"/>
</dbReference>
<dbReference type="NCBIfam" id="TIGR01308">
    <property type="entry name" value="rpmD_bact"/>
    <property type="match status" value="1"/>
</dbReference>
<dbReference type="PANTHER" id="PTHR15892:SF2">
    <property type="entry name" value="LARGE RIBOSOMAL SUBUNIT PROTEIN UL30M"/>
    <property type="match status" value="1"/>
</dbReference>
<dbReference type="PANTHER" id="PTHR15892">
    <property type="entry name" value="MITOCHONDRIAL RIBOSOMAL PROTEIN L30"/>
    <property type="match status" value="1"/>
</dbReference>
<dbReference type="Pfam" id="PF00327">
    <property type="entry name" value="Ribosomal_L30"/>
    <property type="match status" value="1"/>
</dbReference>
<dbReference type="SUPFAM" id="SSF55129">
    <property type="entry name" value="Ribosomal protein L30p/L7e"/>
    <property type="match status" value="1"/>
</dbReference>
<dbReference type="PROSITE" id="PS00634">
    <property type="entry name" value="RIBOSOMAL_L30"/>
    <property type="match status" value="1"/>
</dbReference>
<name>RL30_MICLC</name>
<organism>
    <name type="scientific">Micrococcus luteus (strain ATCC 4698 / DSM 20030 / JCM 1464 / CCM 169 / CCUG 5858 / IAM 1056 / NBRC 3333 / NCIMB 9278 / NCTC 2665 / VKM Ac-2230)</name>
    <name type="common">Micrococcus lysodeikticus</name>
    <dbReference type="NCBI Taxonomy" id="465515"/>
    <lineage>
        <taxon>Bacteria</taxon>
        <taxon>Bacillati</taxon>
        <taxon>Actinomycetota</taxon>
        <taxon>Actinomycetes</taxon>
        <taxon>Micrococcales</taxon>
        <taxon>Micrococcaceae</taxon>
        <taxon>Micrococcus</taxon>
    </lineage>
</organism>
<reference key="1">
    <citation type="journal article" date="2010" name="J. Bacteriol.">
        <title>Genome sequence of the Fleming strain of Micrococcus luteus, a simple free-living actinobacterium.</title>
        <authorList>
            <person name="Young M."/>
            <person name="Artsatbanov V."/>
            <person name="Beller H.R."/>
            <person name="Chandra G."/>
            <person name="Chater K.F."/>
            <person name="Dover L.G."/>
            <person name="Goh E.B."/>
            <person name="Kahan T."/>
            <person name="Kaprelyants A.S."/>
            <person name="Kyrpides N."/>
            <person name="Lapidus A."/>
            <person name="Lowry S.R."/>
            <person name="Lykidis A."/>
            <person name="Mahillon J."/>
            <person name="Markowitz V."/>
            <person name="Mavromatis K."/>
            <person name="Mukamolova G.V."/>
            <person name="Oren A."/>
            <person name="Rokem J.S."/>
            <person name="Smith M.C."/>
            <person name="Young D.I."/>
            <person name="Greenblatt C.L."/>
        </authorList>
    </citation>
    <scope>NUCLEOTIDE SEQUENCE [LARGE SCALE GENOMIC DNA]</scope>
    <source>
        <strain>ATCC 4698 / DSM 20030 / JCM 1464 / CCM 169 / CCUG 5858 / IAM 1056 / NBRC 3333 / NCIMB 9278 / NCTC 2665 / VKM Ac-2230</strain>
    </source>
</reference>
<feature type="chain" id="PRO_1000215069" description="Large ribosomal subunit protein uL30">
    <location>
        <begin position="1"/>
        <end position="74"/>
    </location>
</feature>
<keyword id="KW-1185">Reference proteome</keyword>
<keyword id="KW-0687">Ribonucleoprotein</keyword>
<keyword id="KW-0689">Ribosomal protein</keyword>
<accession>C5CC45</accession>